<dbReference type="EMBL" id="CH408031">
    <property type="protein sequence ID" value="EAQ89666.1"/>
    <property type="status" value="ALT_SEQ"/>
    <property type="molecule type" value="Genomic_DNA"/>
</dbReference>
<dbReference type="RefSeq" id="XP_001222380.1">
    <property type="nucleotide sequence ID" value="XM_001222379.1"/>
</dbReference>
<dbReference type="GeneID" id="4391308"/>
<dbReference type="VEuPathDB" id="FungiDB:CHGG_06285"/>
<dbReference type="eggNOG" id="ENOG502S2G8">
    <property type="taxonomic scope" value="Eukaryota"/>
</dbReference>
<dbReference type="HOGENOM" id="CLU_136894_1_1_1"/>
<dbReference type="InParanoid" id="Q2H4Y0"/>
<dbReference type="OrthoDB" id="5576752at2759"/>
<dbReference type="Proteomes" id="UP000001056">
    <property type="component" value="Unassembled WGS sequence"/>
</dbReference>
<dbReference type="GO" id="GO:0005743">
    <property type="term" value="C:mitochondrial inner membrane"/>
    <property type="evidence" value="ECO:0007669"/>
    <property type="project" value="UniProtKB-SubCell"/>
</dbReference>
<dbReference type="GO" id="GO:0034551">
    <property type="term" value="P:mitochondrial respiratory chain complex III assembly"/>
    <property type="evidence" value="ECO:0007669"/>
    <property type="project" value="TreeGrafter"/>
</dbReference>
<dbReference type="InterPro" id="IPR012420">
    <property type="entry name" value="Cbp4"/>
</dbReference>
<dbReference type="PANTHER" id="PTHR28202">
    <property type="entry name" value="ASSEMBLY FACTOR CBP4"/>
    <property type="match status" value="1"/>
</dbReference>
<dbReference type="PANTHER" id="PTHR28202:SF1">
    <property type="entry name" value="ASSEMBLY FACTOR CBP4"/>
    <property type="match status" value="1"/>
</dbReference>
<dbReference type="Pfam" id="PF07960">
    <property type="entry name" value="CBP4"/>
    <property type="match status" value="1"/>
</dbReference>
<reference key="1">
    <citation type="journal article" date="2015" name="Genome Announc.">
        <title>Draft genome sequence of the cellulolytic fungus Chaetomium globosum.</title>
        <authorList>
            <person name="Cuomo C.A."/>
            <person name="Untereiner W.A."/>
            <person name="Ma L.-J."/>
            <person name="Grabherr M."/>
            <person name="Birren B.W."/>
        </authorList>
    </citation>
    <scope>NUCLEOTIDE SEQUENCE [LARGE SCALE GENOMIC DNA]</scope>
    <source>
        <strain>ATCC 6205 / CBS 148.51 / DSM 1962 / NBRC 6347 / NRRL 1970</strain>
    </source>
</reference>
<accession>Q2H4Y0</accession>
<feature type="chain" id="PRO_0000330125" description="Assembly factor CBP4">
    <location>
        <begin position="1"/>
        <end position="130"/>
    </location>
</feature>
<feature type="transmembrane region" description="Helical" evidence="2">
    <location>
        <begin position="7"/>
        <end position="29"/>
    </location>
</feature>
<feature type="region of interest" description="Disordered" evidence="3">
    <location>
        <begin position="111"/>
        <end position="130"/>
    </location>
</feature>
<feature type="coiled-coil region" evidence="2">
    <location>
        <begin position="93"/>
        <end position="118"/>
    </location>
</feature>
<proteinExistence type="inferred from homology"/>
<name>CBP4_CHAGB</name>
<keyword id="KW-0143">Chaperone</keyword>
<keyword id="KW-0175">Coiled coil</keyword>
<keyword id="KW-0472">Membrane</keyword>
<keyword id="KW-0496">Mitochondrion</keyword>
<keyword id="KW-0999">Mitochondrion inner membrane</keyword>
<keyword id="KW-1185">Reference proteome</keyword>
<keyword id="KW-0812">Transmembrane</keyword>
<keyword id="KW-1133">Transmembrane helix</keyword>
<organism>
    <name type="scientific">Chaetomium globosum (strain ATCC 6205 / CBS 148.51 / DSM 1962 / NBRC 6347 / NRRL 1970)</name>
    <name type="common">Soil fungus</name>
    <dbReference type="NCBI Taxonomy" id="306901"/>
    <lineage>
        <taxon>Eukaryota</taxon>
        <taxon>Fungi</taxon>
        <taxon>Dikarya</taxon>
        <taxon>Ascomycota</taxon>
        <taxon>Pezizomycotina</taxon>
        <taxon>Sordariomycetes</taxon>
        <taxon>Sordariomycetidae</taxon>
        <taxon>Sordariales</taxon>
        <taxon>Chaetomiaceae</taxon>
        <taxon>Chaetomium</taxon>
    </lineage>
</organism>
<comment type="function">
    <text evidence="1">Essential for the assembly of ubiquinol-cytochrome c reductase. It has a direct effect on the correct occurrence of the Rieske protein, core 4, core 5 and apocytochrome b (By similarity).</text>
</comment>
<comment type="subcellular location">
    <subcellularLocation>
        <location evidence="1">Mitochondrion inner membrane</location>
        <topology evidence="1">Single-pass membrane protein</topology>
    </subcellularLocation>
</comment>
<comment type="similarity">
    <text evidence="4">Belongs to the CBP4 family.</text>
</comment>
<comment type="sequence caution" evidence="4">
    <conflict type="erroneous gene model prediction">
        <sequence resource="EMBL-CDS" id="EAQ89666"/>
    </conflict>
</comment>
<protein>
    <recommendedName>
        <fullName>Assembly factor CBP4</fullName>
    </recommendedName>
    <alternativeName>
        <fullName>Cytochrome b mRNA-processing protein 4</fullName>
    </alternativeName>
</protein>
<gene>
    <name type="primary">CBP4</name>
    <name type="ORF">CHGG_06285</name>
</gene>
<sequence length="130" mass="15163">MVKKPFNWWLWTKMLVAGGAIIVGGPALTRWVQPTDEELFQKYNPELQKRSLERRFERQQEFDDFVNRLKRDSKSDKPIWTVQAEAEKERVRQASIAESLKAAEELKARKEAMRREVGLPAESASSETTR</sequence>
<evidence type="ECO:0000250" key="1"/>
<evidence type="ECO:0000255" key="2"/>
<evidence type="ECO:0000256" key="3">
    <source>
        <dbReference type="SAM" id="MobiDB-lite"/>
    </source>
</evidence>
<evidence type="ECO:0000305" key="4"/>